<dbReference type="EMBL" id="CP001139">
    <property type="protein sequence ID" value="ACH66738.1"/>
    <property type="molecule type" value="Genomic_DNA"/>
</dbReference>
<dbReference type="RefSeq" id="WP_005420138.1">
    <property type="nucleotide sequence ID" value="NC_011184.1"/>
</dbReference>
<dbReference type="SMR" id="B5FG43"/>
<dbReference type="GeneID" id="54164443"/>
<dbReference type="KEGG" id="vfm:VFMJ11_1871"/>
<dbReference type="HOGENOM" id="CLU_129084_2_1_6"/>
<dbReference type="Proteomes" id="UP000001857">
    <property type="component" value="Chromosome I"/>
</dbReference>
<dbReference type="GO" id="GO:0015934">
    <property type="term" value="C:large ribosomal subunit"/>
    <property type="evidence" value="ECO:0007669"/>
    <property type="project" value="InterPro"/>
</dbReference>
<dbReference type="GO" id="GO:0003735">
    <property type="term" value="F:structural constituent of ribosome"/>
    <property type="evidence" value="ECO:0007669"/>
    <property type="project" value="InterPro"/>
</dbReference>
<dbReference type="GO" id="GO:0006412">
    <property type="term" value="P:translation"/>
    <property type="evidence" value="ECO:0007669"/>
    <property type="project" value="UniProtKB-UniRule"/>
</dbReference>
<dbReference type="HAMAP" id="MF_00340">
    <property type="entry name" value="Ribosomal_bL32"/>
    <property type="match status" value="1"/>
</dbReference>
<dbReference type="InterPro" id="IPR002677">
    <property type="entry name" value="Ribosomal_bL32"/>
</dbReference>
<dbReference type="InterPro" id="IPR044957">
    <property type="entry name" value="Ribosomal_bL32_bact"/>
</dbReference>
<dbReference type="InterPro" id="IPR011332">
    <property type="entry name" value="Ribosomal_zn-bd"/>
</dbReference>
<dbReference type="NCBIfam" id="TIGR01031">
    <property type="entry name" value="rpmF_bact"/>
    <property type="match status" value="1"/>
</dbReference>
<dbReference type="PANTHER" id="PTHR35534">
    <property type="entry name" value="50S RIBOSOMAL PROTEIN L32"/>
    <property type="match status" value="1"/>
</dbReference>
<dbReference type="PANTHER" id="PTHR35534:SF1">
    <property type="entry name" value="LARGE RIBOSOMAL SUBUNIT PROTEIN BL32"/>
    <property type="match status" value="1"/>
</dbReference>
<dbReference type="Pfam" id="PF01783">
    <property type="entry name" value="Ribosomal_L32p"/>
    <property type="match status" value="1"/>
</dbReference>
<dbReference type="SUPFAM" id="SSF57829">
    <property type="entry name" value="Zn-binding ribosomal proteins"/>
    <property type="match status" value="1"/>
</dbReference>
<accession>B5FG43</accession>
<proteinExistence type="inferred from homology"/>
<sequence>MAVQKSKKSRSMRGMRRSHDALTTSAVSVDATSGETHLRHNVTADGYYRGRKVINK</sequence>
<keyword id="KW-0687">Ribonucleoprotein</keyword>
<keyword id="KW-0689">Ribosomal protein</keyword>
<protein>
    <recommendedName>
        <fullName evidence="1">Large ribosomal subunit protein bL32</fullName>
    </recommendedName>
    <alternativeName>
        <fullName evidence="3">50S ribosomal protein L32</fullName>
    </alternativeName>
</protein>
<evidence type="ECO:0000255" key="1">
    <source>
        <dbReference type="HAMAP-Rule" id="MF_00340"/>
    </source>
</evidence>
<evidence type="ECO:0000256" key="2">
    <source>
        <dbReference type="SAM" id="MobiDB-lite"/>
    </source>
</evidence>
<evidence type="ECO:0000305" key="3"/>
<gene>
    <name evidence="1" type="primary">rpmF</name>
    <name type="ordered locus">VFMJ11_1871</name>
</gene>
<name>RL32_ALIFM</name>
<comment type="similarity">
    <text evidence="1">Belongs to the bacterial ribosomal protein bL32 family.</text>
</comment>
<organism>
    <name type="scientific">Aliivibrio fischeri (strain MJ11)</name>
    <name type="common">Vibrio fischeri</name>
    <dbReference type="NCBI Taxonomy" id="388396"/>
    <lineage>
        <taxon>Bacteria</taxon>
        <taxon>Pseudomonadati</taxon>
        <taxon>Pseudomonadota</taxon>
        <taxon>Gammaproteobacteria</taxon>
        <taxon>Vibrionales</taxon>
        <taxon>Vibrionaceae</taxon>
        <taxon>Aliivibrio</taxon>
    </lineage>
</organism>
<feature type="chain" id="PRO_1000120188" description="Large ribosomal subunit protein bL32">
    <location>
        <begin position="1"/>
        <end position="56"/>
    </location>
</feature>
<feature type="region of interest" description="Disordered" evidence="2">
    <location>
        <begin position="1"/>
        <end position="33"/>
    </location>
</feature>
<feature type="compositionally biased region" description="Basic residues" evidence="2">
    <location>
        <begin position="1"/>
        <end position="16"/>
    </location>
</feature>
<feature type="compositionally biased region" description="Polar residues" evidence="2">
    <location>
        <begin position="21"/>
        <end position="33"/>
    </location>
</feature>
<reference key="1">
    <citation type="submission" date="2008-08" db="EMBL/GenBank/DDBJ databases">
        <title>Complete sequence of Vibrio fischeri strain MJ11.</title>
        <authorList>
            <person name="Mandel M.J."/>
            <person name="Stabb E.V."/>
            <person name="Ruby E.G."/>
            <person name="Ferriera S."/>
            <person name="Johnson J."/>
            <person name="Kravitz S."/>
            <person name="Beeson K."/>
            <person name="Sutton G."/>
            <person name="Rogers Y.-H."/>
            <person name="Friedman R."/>
            <person name="Frazier M."/>
            <person name="Venter J.C."/>
        </authorList>
    </citation>
    <scope>NUCLEOTIDE SEQUENCE [LARGE SCALE GENOMIC DNA]</scope>
    <source>
        <strain>MJ11</strain>
    </source>
</reference>